<protein>
    <recommendedName>
        <fullName>Intracellular growth attenuator protein IgaA</fullName>
    </recommendedName>
</protein>
<sequence length="710" mass="79362">MSTILIFIAALLACSLLAIWRFRVKSRRGSLPWISAFQDAQTRKLLPEERSAVENYLDNLSQIQQVPGPTGASAAPISLTLNAESNSVVILTHSITRYGITTDDPNKWRYYLDSVEVHLPPFWEQYINDENNVELILTDTLPLVISLNGHTLQEYMQESRGYALQNTASTQASIRGEESEQIELLNIRQETHEEYALSRPAGLREALLIVASFLLFFFCLITPDVFVPWMIGGAILLLAAGLWGLFAPPSKSALREIHCLRGTPRRWGLFGENNQEQINNISLGIIDLIYPAHWQPYITQDLGQQTDIDIYLDRHVARQGRFLSLHDEVKNFPLQHWLRSTVIAIGSLLVLFMLLFWIPLDMPIKFTLSWMKGAQTIEATTVKQLEKAGVRVGDTLHLSGKGMCNIHSGATWSGQSNSPFMPFDCSQIIWNDAPALPLPESDLVNKAMALSQAVNRQLHPKPEDDSRVSASLRSAIQKSGMVLLDDFGDIVLKTADLCAAEDECVRLKNALVNLGNSKDWNALVKRANAGKLDGVNVLLRPVSAESLENLVTTSTAPFISRETARAAQSLNSPAPGGFLIASDEGSELVDQTWPSTPLYDYPAQEQWSAFQRLAQTLMQTPFSAEGIVTSVYTDANGTQHISLHRIPDKSGWWRYLGTTLLMLAMIVSAVYNGIQAFRRYQRHRTRMADIQEYYESCLNPRLTVSPENLI</sequence>
<feature type="chain" id="PRO_0000215017" description="Intracellular growth attenuator protein IgaA">
    <location>
        <begin position="1"/>
        <end position="710"/>
    </location>
</feature>
<feature type="topological domain" description="Periplasmic" evidence="2">
    <location>
        <position position="1"/>
    </location>
</feature>
<feature type="transmembrane region" description="Helical" evidence="2">
    <location>
        <begin position="2"/>
        <end position="22"/>
    </location>
</feature>
<feature type="topological domain" description="Cytoplasmic" evidence="2">
    <location>
        <begin position="23"/>
        <end position="204"/>
    </location>
</feature>
<feature type="transmembrane region" description="Helical" evidence="2">
    <location>
        <begin position="205"/>
        <end position="225"/>
    </location>
</feature>
<feature type="transmembrane region" description="Helical" evidence="2">
    <location>
        <begin position="226"/>
        <end position="246"/>
    </location>
</feature>
<feature type="topological domain" description="Cytoplasmic" evidence="2">
    <location>
        <begin position="247"/>
        <end position="339"/>
    </location>
</feature>
<feature type="transmembrane region" description="Helical" evidence="2">
    <location>
        <begin position="340"/>
        <end position="360"/>
    </location>
</feature>
<feature type="topological domain" description="Periplasmic" evidence="2">
    <location>
        <begin position="361"/>
        <end position="656"/>
    </location>
</feature>
<feature type="transmembrane region" description="Helical" evidence="2">
    <location>
        <begin position="657"/>
        <end position="677"/>
    </location>
</feature>
<feature type="topological domain" description="Cytoplasmic" evidence="2">
    <location>
        <begin position="678"/>
        <end position="710"/>
    </location>
</feature>
<accession>P0CL13</accession>
<accession>Q9ACP0</accession>
<keyword id="KW-0997">Cell inner membrane</keyword>
<keyword id="KW-1003">Cell membrane</keyword>
<keyword id="KW-0341">Growth regulation</keyword>
<keyword id="KW-0472">Membrane</keyword>
<keyword id="KW-1185">Reference proteome</keyword>
<keyword id="KW-0812">Transmembrane</keyword>
<keyword id="KW-1133">Transmembrane helix</keyword>
<keyword id="KW-0843">Virulence</keyword>
<organism>
    <name type="scientific">Salmonella typhimurium (strain LT2 / SGSC1412 / ATCC 700720)</name>
    <dbReference type="NCBI Taxonomy" id="99287"/>
    <lineage>
        <taxon>Bacteria</taxon>
        <taxon>Pseudomonadati</taxon>
        <taxon>Pseudomonadota</taxon>
        <taxon>Gammaproteobacteria</taxon>
        <taxon>Enterobacterales</taxon>
        <taxon>Enterobacteriaceae</taxon>
        <taxon>Salmonella</taxon>
    </lineage>
</organism>
<comment type="function">
    <text evidence="1">Involved in negative control of bacterial proliferation within fibroblasts.</text>
</comment>
<comment type="subcellular location">
    <subcellularLocation>
        <location evidence="1">Cell inner membrane</location>
        <topology evidence="1">Multi-pass membrane protein</topology>
    </subcellularLocation>
</comment>
<comment type="similarity">
    <text evidence="3">Belongs to the IgaA family.</text>
</comment>
<evidence type="ECO:0000250" key="1"/>
<evidence type="ECO:0000255" key="2"/>
<evidence type="ECO:0000305" key="3"/>
<dbReference type="EMBL" id="AE006468">
    <property type="protein sequence ID" value="AAL22357.1"/>
    <property type="molecule type" value="Genomic_DNA"/>
</dbReference>
<dbReference type="RefSeq" id="WP_000104094.1">
    <property type="nucleotide sequence ID" value="NC_003197.2"/>
</dbReference>
<dbReference type="SMR" id="P0CL13"/>
<dbReference type="STRING" id="99287.STM3495"/>
<dbReference type="PaxDb" id="99287-STM3495"/>
<dbReference type="KEGG" id="stm:STM3495"/>
<dbReference type="PATRIC" id="fig|99287.12.peg.3694"/>
<dbReference type="HOGENOM" id="CLU_014723_0_0_6"/>
<dbReference type="OMA" id="LIYPPHW"/>
<dbReference type="PhylomeDB" id="P0CL13"/>
<dbReference type="BioCyc" id="SENT99287:STM3495-MONOMER"/>
<dbReference type="Proteomes" id="UP000001014">
    <property type="component" value="Chromosome"/>
</dbReference>
<dbReference type="GO" id="GO:0005886">
    <property type="term" value="C:plasma membrane"/>
    <property type="evidence" value="ECO:0007669"/>
    <property type="project" value="UniProtKB-SubCell"/>
</dbReference>
<dbReference type="InterPro" id="IPR010771">
    <property type="entry name" value="IgaA"/>
</dbReference>
<dbReference type="Pfam" id="PF07095">
    <property type="entry name" value="IgaA"/>
    <property type="match status" value="1"/>
</dbReference>
<name>IGAA_SALTY</name>
<proteinExistence type="inferred from homology"/>
<reference key="1">
    <citation type="journal article" date="2001" name="Nature">
        <title>Complete genome sequence of Salmonella enterica serovar Typhimurium LT2.</title>
        <authorList>
            <person name="McClelland M."/>
            <person name="Sanderson K.E."/>
            <person name="Spieth J."/>
            <person name="Clifton S.W."/>
            <person name="Latreille P."/>
            <person name="Courtney L."/>
            <person name="Porwollik S."/>
            <person name="Ali J."/>
            <person name="Dante M."/>
            <person name="Du F."/>
            <person name="Hou S."/>
            <person name="Layman D."/>
            <person name="Leonard S."/>
            <person name="Nguyen C."/>
            <person name="Scott K."/>
            <person name="Holmes A."/>
            <person name="Grewal N."/>
            <person name="Mulvaney E."/>
            <person name="Ryan E."/>
            <person name="Sun H."/>
            <person name="Florea L."/>
            <person name="Miller W."/>
            <person name="Stoneking T."/>
            <person name="Nhan M."/>
            <person name="Waterston R."/>
            <person name="Wilson R.K."/>
        </authorList>
    </citation>
    <scope>NUCLEOTIDE SEQUENCE [LARGE SCALE GENOMIC DNA]</scope>
    <source>
        <strain>LT2 / SGSC1412 / ATCC 700720</strain>
    </source>
</reference>
<gene>
    <name type="primary">igaA</name>
    <name type="ordered locus">STM3495</name>
</gene>